<proteinExistence type="inferred from homology"/>
<evidence type="ECO:0000255" key="1">
    <source>
        <dbReference type="HAMAP-Rule" id="MF_00140"/>
    </source>
</evidence>
<feature type="chain" id="PRO_0000136622" description="Tryptophan--tRNA ligase">
    <location>
        <begin position="1"/>
        <end position="341"/>
    </location>
</feature>
<feature type="short sequence motif" description="'HIGH' region" evidence="1">
    <location>
        <begin position="12"/>
        <end position="20"/>
    </location>
</feature>
<feature type="short sequence motif" description="'KMSKS' region" evidence="1">
    <location>
        <begin position="201"/>
        <end position="205"/>
    </location>
</feature>
<feature type="binding site" evidence="1">
    <location>
        <begin position="11"/>
        <end position="13"/>
    </location>
    <ligand>
        <name>ATP</name>
        <dbReference type="ChEBI" id="CHEBI:30616"/>
    </ligand>
</feature>
<feature type="binding site" evidence="1">
    <location>
        <begin position="19"/>
        <end position="20"/>
    </location>
    <ligand>
        <name>ATP</name>
        <dbReference type="ChEBI" id="CHEBI:30616"/>
    </ligand>
</feature>
<feature type="binding site" evidence="1">
    <location>
        <position position="140"/>
    </location>
    <ligand>
        <name>L-tryptophan</name>
        <dbReference type="ChEBI" id="CHEBI:57912"/>
    </ligand>
</feature>
<feature type="binding site" evidence="1">
    <location>
        <begin position="152"/>
        <end position="154"/>
    </location>
    <ligand>
        <name>ATP</name>
        <dbReference type="ChEBI" id="CHEBI:30616"/>
    </ligand>
</feature>
<feature type="binding site" evidence="1">
    <location>
        <position position="193"/>
    </location>
    <ligand>
        <name>ATP</name>
        <dbReference type="ChEBI" id="CHEBI:30616"/>
    </ligand>
</feature>
<feature type="binding site" evidence="1">
    <location>
        <begin position="201"/>
        <end position="205"/>
    </location>
    <ligand>
        <name>ATP</name>
        <dbReference type="ChEBI" id="CHEBI:30616"/>
    </ligand>
</feature>
<dbReference type="EC" id="6.1.1.2" evidence="1"/>
<dbReference type="EMBL" id="L49336">
    <property type="protein sequence ID" value="AAC05711.1"/>
    <property type="molecule type" value="Genomic_DNA"/>
</dbReference>
<dbReference type="SMR" id="Q46127"/>
<dbReference type="GO" id="GO:0005829">
    <property type="term" value="C:cytosol"/>
    <property type="evidence" value="ECO:0007669"/>
    <property type="project" value="TreeGrafter"/>
</dbReference>
<dbReference type="GO" id="GO:0005524">
    <property type="term" value="F:ATP binding"/>
    <property type="evidence" value="ECO:0007669"/>
    <property type="project" value="UniProtKB-UniRule"/>
</dbReference>
<dbReference type="GO" id="GO:0004830">
    <property type="term" value="F:tryptophan-tRNA ligase activity"/>
    <property type="evidence" value="ECO:0007669"/>
    <property type="project" value="UniProtKB-UniRule"/>
</dbReference>
<dbReference type="GO" id="GO:0006436">
    <property type="term" value="P:tryptophanyl-tRNA aminoacylation"/>
    <property type="evidence" value="ECO:0007669"/>
    <property type="project" value="UniProtKB-UniRule"/>
</dbReference>
<dbReference type="CDD" id="cd00806">
    <property type="entry name" value="TrpRS_core"/>
    <property type="match status" value="1"/>
</dbReference>
<dbReference type="FunFam" id="1.10.240.10:FF:000005">
    <property type="entry name" value="Tryptophan--tRNA ligase"/>
    <property type="match status" value="1"/>
</dbReference>
<dbReference type="FunFam" id="3.40.50.620:FF:000094">
    <property type="entry name" value="Tryptophan--tRNA ligase"/>
    <property type="match status" value="1"/>
</dbReference>
<dbReference type="Gene3D" id="3.40.50.620">
    <property type="entry name" value="HUPs"/>
    <property type="match status" value="1"/>
</dbReference>
<dbReference type="Gene3D" id="1.10.240.10">
    <property type="entry name" value="Tyrosyl-Transfer RNA Synthetase"/>
    <property type="match status" value="1"/>
</dbReference>
<dbReference type="HAMAP" id="MF_00140_B">
    <property type="entry name" value="Trp_tRNA_synth_B"/>
    <property type="match status" value="1"/>
</dbReference>
<dbReference type="InterPro" id="IPR001412">
    <property type="entry name" value="aa-tRNA-synth_I_CS"/>
</dbReference>
<dbReference type="InterPro" id="IPR002305">
    <property type="entry name" value="aa-tRNA-synth_Ic"/>
</dbReference>
<dbReference type="InterPro" id="IPR014729">
    <property type="entry name" value="Rossmann-like_a/b/a_fold"/>
</dbReference>
<dbReference type="InterPro" id="IPR002306">
    <property type="entry name" value="Trp-tRNA-ligase"/>
</dbReference>
<dbReference type="InterPro" id="IPR024109">
    <property type="entry name" value="Trp-tRNA-ligase_bac-type"/>
</dbReference>
<dbReference type="InterPro" id="IPR050203">
    <property type="entry name" value="Trp-tRNA_synthetase"/>
</dbReference>
<dbReference type="NCBIfam" id="TIGR00233">
    <property type="entry name" value="trpS"/>
    <property type="match status" value="1"/>
</dbReference>
<dbReference type="PANTHER" id="PTHR43766">
    <property type="entry name" value="TRYPTOPHAN--TRNA LIGASE, MITOCHONDRIAL"/>
    <property type="match status" value="1"/>
</dbReference>
<dbReference type="PANTHER" id="PTHR43766:SF1">
    <property type="entry name" value="TRYPTOPHAN--TRNA LIGASE, MITOCHONDRIAL"/>
    <property type="match status" value="1"/>
</dbReference>
<dbReference type="Pfam" id="PF00579">
    <property type="entry name" value="tRNA-synt_1b"/>
    <property type="match status" value="1"/>
</dbReference>
<dbReference type="PRINTS" id="PR01039">
    <property type="entry name" value="TRNASYNTHTRP"/>
</dbReference>
<dbReference type="SUPFAM" id="SSF52374">
    <property type="entry name" value="Nucleotidylyl transferase"/>
    <property type="match status" value="1"/>
</dbReference>
<dbReference type="PROSITE" id="PS00178">
    <property type="entry name" value="AA_TRNA_LIGASE_I"/>
    <property type="match status" value="1"/>
</dbReference>
<organism>
    <name type="scientific">Clostridium longisporum</name>
    <dbReference type="NCBI Taxonomy" id="1523"/>
    <lineage>
        <taxon>Bacteria</taxon>
        <taxon>Bacillati</taxon>
        <taxon>Bacillota</taxon>
        <taxon>Clostridia</taxon>
        <taxon>Eubacteriales</taxon>
        <taxon>Clostridiaceae</taxon>
        <taxon>Clostridium</taxon>
    </lineage>
</organism>
<sequence length="341" mass="38256">MAKEIILTGDRPTGKLHIGHYVGSLKNRVQLQNSGDYRSFIMIADQQALTDNARNPEKIRNSLIEVALDYLAVGIDPLKSTILVQSQIPELNELTMHYLNLVTLSRLERNPTVKAEIKQKNFENSIPAGFLIYPVSQAADITAFKATTVPVGEDQLPMIEQAREIVRSFNTIYGKEVLVEPKAVIPKGTIGRLPGTDGKAKMSKSIGNAIYLADEADVIKQKVMSMYTDPNHIKVTDPGQVEGNTVFTYLDTFCKDTETLEEMKAHYSRGGLGDVKVKKFLNEILQAELEPIRNRRKEFQKDIPEVYRILKEGSEKAREVAAGTLKEVRETIGIEYFNNIF</sequence>
<reference key="1">
    <citation type="submission" date="1995-12" db="EMBL/GenBank/DDBJ databases">
        <authorList>
            <person name="Brown G.D."/>
            <person name="Thomson J.A."/>
        </authorList>
    </citation>
    <scope>NUCLEOTIDE SEQUENCE [GENOMIC DNA]</scope>
    <source>
        <strain>B6405</strain>
    </source>
</reference>
<protein>
    <recommendedName>
        <fullName evidence="1">Tryptophan--tRNA ligase</fullName>
        <ecNumber evidence="1">6.1.1.2</ecNumber>
    </recommendedName>
    <alternativeName>
        <fullName evidence="1">Tryptophanyl-tRNA synthetase</fullName>
        <shortName evidence="1">TrpRS</shortName>
    </alternativeName>
</protein>
<name>SYW_CLOLO</name>
<keyword id="KW-0030">Aminoacyl-tRNA synthetase</keyword>
<keyword id="KW-0067">ATP-binding</keyword>
<keyword id="KW-0963">Cytoplasm</keyword>
<keyword id="KW-0436">Ligase</keyword>
<keyword id="KW-0547">Nucleotide-binding</keyword>
<keyword id="KW-0648">Protein biosynthesis</keyword>
<gene>
    <name evidence="1" type="primary">trpS</name>
    <name type="synonym">trsA</name>
</gene>
<accession>Q46127</accession>
<comment type="function">
    <text evidence="1">Catalyzes the attachment of tryptophan to tRNA(Trp).</text>
</comment>
<comment type="catalytic activity">
    <reaction evidence="1">
        <text>tRNA(Trp) + L-tryptophan + ATP = L-tryptophyl-tRNA(Trp) + AMP + diphosphate + H(+)</text>
        <dbReference type="Rhea" id="RHEA:24080"/>
        <dbReference type="Rhea" id="RHEA-COMP:9671"/>
        <dbReference type="Rhea" id="RHEA-COMP:9705"/>
        <dbReference type="ChEBI" id="CHEBI:15378"/>
        <dbReference type="ChEBI" id="CHEBI:30616"/>
        <dbReference type="ChEBI" id="CHEBI:33019"/>
        <dbReference type="ChEBI" id="CHEBI:57912"/>
        <dbReference type="ChEBI" id="CHEBI:78442"/>
        <dbReference type="ChEBI" id="CHEBI:78535"/>
        <dbReference type="ChEBI" id="CHEBI:456215"/>
        <dbReference type="EC" id="6.1.1.2"/>
    </reaction>
</comment>
<comment type="subunit">
    <text evidence="1">Homodimer.</text>
</comment>
<comment type="subcellular location">
    <subcellularLocation>
        <location evidence="1">Cytoplasm</location>
    </subcellularLocation>
</comment>
<comment type="similarity">
    <text evidence="1">Belongs to the class-I aminoacyl-tRNA synthetase family.</text>
</comment>